<protein>
    <recommendedName>
        <fullName>Galactinol synthase 5</fullName>
        <shortName>AtGolS5</shortName>
        <shortName>GolS-5</shortName>
        <ecNumber>2.4.1.123</ecNumber>
    </recommendedName>
</protein>
<reference key="1">
    <citation type="journal article" date="1997" name="DNA Res.">
        <title>Structural analysis of Arabidopsis thaliana chromosome 5. I. Sequence features of the 1.6 Mb regions covered by twenty physically assigned P1 clones.</title>
        <authorList>
            <person name="Sato S."/>
            <person name="Kotani H."/>
            <person name="Nakamura Y."/>
            <person name="Kaneko T."/>
            <person name="Asamizu E."/>
            <person name="Fukami M."/>
            <person name="Miyajima N."/>
            <person name="Tabata S."/>
        </authorList>
    </citation>
    <scope>NUCLEOTIDE SEQUENCE [LARGE SCALE GENOMIC DNA]</scope>
    <source>
        <strain>cv. Columbia</strain>
    </source>
</reference>
<reference key="2">
    <citation type="journal article" date="2017" name="Plant J.">
        <title>Araport11: a complete reannotation of the Arabidopsis thaliana reference genome.</title>
        <authorList>
            <person name="Cheng C.Y."/>
            <person name="Krishnakumar V."/>
            <person name="Chan A.P."/>
            <person name="Thibaud-Nissen F."/>
            <person name="Schobel S."/>
            <person name="Town C.D."/>
        </authorList>
    </citation>
    <scope>GENOME REANNOTATION</scope>
    <source>
        <strain>cv. Columbia</strain>
    </source>
</reference>
<reference key="3">
    <citation type="journal article" date="2002" name="Plant J.">
        <title>Important roles of drought- and cold-inducible genes for galactinol synthase in stress tolerance in Arabidopsis thaliana.</title>
        <authorList>
            <person name="Taji T."/>
            <person name="Ohsumi C."/>
            <person name="Iuchi S."/>
            <person name="Seki M."/>
            <person name="Kasuga M."/>
            <person name="Kobayashi M."/>
            <person name="Yamaguchi-Shinozaki K."/>
            <person name="Shinozaki K."/>
        </authorList>
    </citation>
    <scope>GENE FAMILY</scope>
</reference>
<reference key="4">
    <citation type="journal article" date="2008" name="Plant Physiol.">
        <title>Galactinol and raffinose constitute a novel function to protect plants from oxidative damage.</title>
        <authorList>
            <person name="Nishizawa A."/>
            <person name="Yabuta Y."/>
            <person name="Shigeoka S."/>
        </authorList>
    </citation>
    <scope>GENE FAMILY</scope>
    <scope>NOMENCLATURE</scope>
</reference>
<feature type="chain" id="PRO_0000418661" description="Galactinol synthase 5">
    <location>
        <begin position="1"/>
        <end position="333"/>
    </location>
</feature>
<feature type="active site" evidence="1">
    <location>
        <position position="103"/>
    </location>
</feature>
<feature type="binding site" evidence="1">
    <location>
        <position position="119"/>
    </location>
    <ligand>
        <name>Mn(2+)</name>
        <dbReference type="ChEBI" id="CHEBI:29035"/>
    </ligand>
</feature>
<feature type="binding site" evidence="1">
    <location>
        <position position="121"/>
    </location>
    <ligand>
        <name>Mn(2+)</name>
        <dbReference type="ChEBI" id="CHEBI:29035"/>
    </ligand>
</feature>
<feature type="binding site" evidence="1">
    <location>
        <position position="257"/>
    </location>
    <ligand>
        <name>Mn(2+)</name>
        <dbReference type="ChEBI" id="CHEBI:29035"/>
    </ligand>
</feature>
<proteinExistence type="evidence at transcript level"/>
<accession>Q9FFA1</accession>
<gene>
    <name type="primary">GOLS5</name>
    <name type="ordered locus">At5g23790</name>
    <name type="ORF">MRO11.17</name>
</gene>
<dbReference type="EC" id="2.4.1.123"/>
<dbReference type="EMBL" id="AB005244">
    <property type="protein sequence ID" value="BAB10052.1"/>
    <property type="molecule type" value="Genomic_DNA"/>
</dbReference>
<dbReference type="EMBL" id="CP002688">
    <property type="protein sequence ID" value="AED93213.1"/>
    <property type="molecule type" value="Genomic_DNA"/>
</dbReference>
<dbReference type="RefSeq" id="NP_197768.1">
    <property type="nucleotide sequence ID" value="NM_122284.2"/>
</dbReference>
<dbReference type="SMR" id="Q9FFA1"/>
<dbReference type="FunCoup" id="Q9FFA1">
    <property type="interactions" value="211"/>
</dbReference>
<dbReference type="STRING" id="3702.Q9FFA1"/>
<dbReference type="CAZy" id="GT8">
    <property type="family name" value="Glycosyltransferase Family 8"/>
</dbReference>
<dbReference type="PaxDb" id="3702-AT5G23790.1"/>
<dbReference type="EnsemblPlants" id="AT5G23790.1">
    <property type="protein sequence ID" value="AT5G23790.1"/>
    <property type="gene ID" value="AT5G23790"/>
</dbReference>
<dbReference type="GeneID" id="832444"/>
<dbReference type="Gramene" id="AT5G23790.1">
    <property type="protein sequence ID" value="AT5G23790.1"/>
    <property type="gene ID" value="AT5G23790"/>
</dbReference>
<dbReference type="KEGG" id="ath:AT5G23790"/>
<dbReference type="Araport" id="AT5G23790"/>
<dbReference type="TAIR" id="AT5G23790">
    <property type="gene designation" value="GOLS5"/>
</dbReference>
<dbReference type="eggNOG" id="KOG1950">
    <property type="taxonomic scope" value="Eukaryota"/>
</dbReference>
<dbReference type="HOGENOM" id="CLU_049943_3_0_1"/>
<dbReference type="InParanoid" id="Q9FFA1"/>
<dbReference type="OMA" id="QIEPVIP"/>
<dbReference type="PhylomeDB" id="Q9FFA1"/>
<dbReference type="PRO" id="PR:Q9FFA1"/>
<dbReference type="Proteomes" id="UP000006548">
    <property type="component" value="Chromosome 5"/>
</dbReference>
<dbReference type="ExpressionAtlas" id="Q9FFA1">
    <property type="expression patterns" value="baseline and differential"/>
</dbReference>
<dbReference type="GO" id="GO:0005737">
    <property type="term" value="C:cytoplasm"/>
    <property type="evidence" value="ECO:0007669"/>
    <property type="project" value="UniProtKB-SubCell"/>
</dbReference>
<dbReference type="GO" id="GO:0047216">
    <property type="term" value="F:inositol 3-alpha-galactosyltransferase activity"/>
    <property type="evidence" value="ECO:0000250"/>
    <property type="project" value="UniProtKB"/>
</dbReference>
<dbReference type="GO" id="GO:0046872">
    <property type="term" value="F:metal ion binding"/>
    <property type="evidence" value="ECO:0007669"/>
    <property type="project" value="UniProtKB-KW"/>
</dbReference>
<dbReference type="GO" id="GO:0006012">
    <property type="term" value="P:galactose metabolic process"/>
    <property type="evidence" value="ECO:0000250"/>
    <property type="project" value="UniProtKB"/>
</dbReference>
<dbReference type="CDD" id="cd02537">
    <property type="entry name" value="GT8_Glycogenin"/>
    <property type="match status" value="1"/>
</dbReference>
<dbReference type="FunFam" id="3.90.550.10:FF:000049">
    <property type="entry name" value="Hexosyltransferase"/>
    <property type="match status" value="1"/>
</dbReference>
<dbReference type="Gene3D" id="3.90.550.10">
    <property type="entry name" value="Spore Coat Polysaccharide Biosynthesis Protein SpsA, Chain A"/>
    <property type="match status" value="1"/>
</dbReference>
<dbReference type="InterPro" id="IPR002495">
    <property type="entry name" value="Glyco_trans_8"/>
</dbReference>
<dbReference type="InterPro" id="IPR050587">
    <property type="entry name" value="GNT1/Glycosyltrans_8"/>
</dbReference>
<dbReference type="InterPro" id="IPR029044">
    <property type="entry name" value="Nucleotide-diphossugar_trans"/>
</dbReference>
<dbReference type="PANTHER" id="PTHR11183">
    <property type="entry name" value="GLYCOGENIN SUBFAMILY MEMBER"/>
    <property type="match status" value="1"/>
</dbReference>
<dbReference type="Pfam" id="PF01501">
    <property type="entry name" value="Glyco_transf_8"/>
    <property type="match status" value="1"/>
</dbReference>
<dbReference type="SUPFAM" id="SSF53448">
    <property type="entry name" value="Nucleotide-diphospho-sugar transferases"/>
    <property type="match status" value="1"/>
</dbReference>
<keyword id="KW-0119">Carbohydrate metabolism</keyword>
<keyword id="KW-0963">Cytoplasm</keyword>
<keyword id="KW-0299">Galactose metabolism</keyword>
<keyword id="KW-0328">Glycosyltransferase</keyword>
<keyword id="KW-0464">Manganese</keyword>
<keyword id="KW-0479">Metal-binding</keyword>
<keyword id="KW-1185">Reference proteome</keyword>
<keyword id="KW-0808">Transferase</keyword>
<sequence>MTMTVEKRIEADVTVSHEGVERAYVTFLAGNKDYWMLVVGLAKGLRKVKSAYPLVVATLPDVPEEHRQILVDQGCIIRDIEPVYPPENTTGYSMAYYVINYSKLRIWEFVEYEKMIYLDGDIQVFKNIDHLFDTPRGYLYAVKDCFCEVSWSKTPQYKIGYCQQSPEKVTWPVESLGAPPPVYFNAGMLVFGPNLVTYEDLLRVVQITTPTYFAEQDFLNIYFRDIYKPIPSTYNLVMAMLWRHPEHIDLDQISVVHYCANGSKPWKFDEAEEHMDREDIKMLVKKWWEIYEDSSLDYKNFVETESKLNPVTATLASKKLVGDVLTSLAPSAA</sequence>
<name>GOLS5_ARATH</name>
<comment type="function">
    <text evidence="1">Galactinol synthase involved in the biosynthesis of raffinose family oligosaccharides (RFOs) that function as osmoprotectants. May promote plant stress tolerance (By similarity).</text>
</comment>
<comment type="catalytic activity">
    <reaction>
        <text>myo-inositol + UDP-alpha-D-galactose = alpha-D-galactosyl-(1-&gt;3)-1D-myo-inositol + UDP + H(+)</text>
        <dbReference type="Rhea" id="RHEA:12464"/>
        <dbReference type="ChEBI" id="CHEBI:15378"/>
        <dbReference type="ChEBI" id="CHEBI:17268"/>
        <dbReference type="ChEBI" id="CHEBI:17505"/>
        <dbReference type="ChEBI" id="CHEBI:58223"/>
        <dbReference type="ChEBI" id="CHEBI:66914"/>
        <dbReference type="EC" id="2.4.1.123"/>
    </reaction>
</comment>
<comment type="cofactor">
    <cofactor evidence="1">
        <name>a divalent metal cation</name>
        <dbReference type="ChEBI" id="CHEBI:60240"/>
    </cofactor>
</comment>
<comment type="subcellular location">
    <subcellularLocation>
        <location evidence="2">Cytoplasm</location>
    </subcellularLocation>
</comment>
<comment type="similarity">
    <text evidence="2">Belongs to the glycosyltransferase 8 family. Galactosyltransferase subfamily.</text>
</comment>
<organism>
    <name type="scientific">Arabidopsis thaliana</name>
    <name type="common">Mouse-ear cress</name>
    <dbReference type="NCBI Taxonomy" id="3702"/>
    <lineage>
        <taxon>Eukaryota</taxon>
        <taxon>Viridiplantae</taxon>
        <taxon>Streptophyta</taxon>
        <taxon>Embryophyta</taxon>
        <taxon>Tracheophyta</taxon>
        <taxon>Spermatophyta</taxon>
        <taxon>Magnoliopsida</taxon>
        <taxon>eudicotyledons</taxon>
        <taxon>Gunneridae</taxon>
        <taxon>Pentapetalae</taxon>
        <taxon>rosids</taxon>
        <taxon>malvids</taxon>
        <taxon>Brassicales</taxon>
        <taxon>Brassicaceae</taxon>
        <taxon>Camelineae</taxon>
        <taxon>Arabidopsis</taxon>
    </lineage>
</organism>
<evidence type="ECO:0000250" key="1"/>
<evidence type="ECO:0000305" key="2"/>